<reference key="1">
    <citation type="submission" date="2004-11" db="EMBL/GenBank/DDBJ databases">
        <authorList>
            <consortium name="The German cDNA consortium"/>
        </authorList>
    </citation>
    <scope>NUCLEOTIDE SEQUENCE [LARGE SCALE MRNA]</scope>
    <source>
        <tissue>Kidney</tissue>
    </source>
</reference>
<feature type="chain" id="PRO_0000051412" description="POC1 centriolar protein homolog B">
    <location>
        <begin position="1"/>
        <end position="451"/>
    </location>
</feature>
<feature type="repeat" description="WD 1">
    <location>
        <begin position="16"/>
        <end position="55"/>
    </location>
</feature>
<feature type="repeat" description="WD 2">
    <location>
        <begin position="58"/>
        <end position="99"/>
    </location>
</feature>
<feature type="repeat" description="WD 3">
    <location>
        <begin position="101"/>
        <end position="139"/>
    </location>
</feature>
<feature type="repeat" description="WD 4">
    <location>
        <begin position="142"/>
        <end position="181"/>
    </location>
</feature>
<feature type="repeat" description="WD 5">
    <location>
        <begin position="183"/>
        <end position="223"/>
    </location>
</feature>
<feature type="repeat" description="WD 6">
    <location>
        <begin position="226"/>
        <end position="265"/>
    </location>
</feature>
<feature type="repeat" description="WD 7">
    <location>
        <begin position="268"/>
        <end position="307"/>
    </location>
</feature>
<feature type="region of interest" description="Disordered" evidence="5">
    <location>
        <begin position="372"/>
        <end position="394"/>
    </location>
</feature>
<feature type="coiled-coil region" evidence="4">
    <location>
        <begin position="404"/>
        <end position="443"/>
    </location>
</feature>
<feature type="modified residue" description="Phosphoserine" evidence="3">
    <location>
        <position position="321"/>
    </location>
</feature>
<evidence type="ECO:0000250" key="1"/>
<evidence type="ECO:0000250" key="2">
    <source>
        <dbReference type="UniProtKB" id="Q8BHD1"/>
    </source>
</evidence>
<evidence type="ECO:0000250" key="3">
    <source>
        <dbReference type="UniProtKB" id="Q8TC44"/>
    </source>
</evidence>
<evidence type="ECO:0000255" key="4"/>
<evidence type="ECO:0000256" key="5">
    <source>
        <dbReference type="SAM" id="MobiDB-lite"/>
    </source>
</evidence>
<evidence type="ECO:0000305" key="6"/>
<name>POC1B_PONAB</name>
<protein>
    <recommendedName>
        <fullName>POC1 centriolar protein homolog B</fullName>
    </recommendedName>
    <alternativeName>
        <fullName>WD repeat-containing protein 51B</fullName>
    </alternativeName>
</protein>
<comment type="function">
    <text evidence="3">Plays an important role in centriole assembly and/or stability and ciliogenesis. Involved in early steps of centriole duplication, as well as in the later steps of centriole length control. Acts in concert with POC1A to ensure centriole integrity and proper mitotic spindle formation. Required for primary cilia formation, ciliary length and also cell proliferation. Required for retinal integrity. Acts as a positive regulator of centriole elongation.</text>
</comment>
<comment type="subunit">
    <text evidence="3">Interacts with POC1A. Interacts with FAM161A. Interacts with CEP44; the interaction is direct and recruits POC1B to centriolar microtubules. Forms a microtubule-associated complex with POC5, CETN2 and FAM161A. Interacts with CCDC15.</text>
</comment>
<comment type="subcellular location">
    <subcellularLocation>
        <location evidence="3">Cytoplasm</location>
        <location evidence="3">Cytoskeleton</location>
        <location evidence="3">Microtubule organizing center</location>
        <location evidence="3">Centrosome</location>
        <location evidence="3">Centriole</location>
    </subcellularLocation>
    <subcellularLocation>
        <location evidence="3">Cytoplasm</location>
        <location evidence="3">Cytoskeleton</location>
        <location evidence="3">Cilium basal body</location>
    </subcellularLocation>
    <subcellularLocation>
        <location evidence="3">Cytoplasm</location>
        <location evidence="3">Cytoskeleton</location>
        <location evidence="3">Spindle pole</location>
    </subcellularLocation>
    <text evidence="2 3">Component of both mother and daughter centrioles. Localizes to the basal body and centriole adjacent to the connecting cilium of photoreceptors and in synapses of the outer plexiform layer. Localizes to the inner scaffold in the central region of centrioles.</text>
</comment>
<comment type="PTM">
    <text evidence="1">Phosphorylated in mitotic cells that may be mediated by CDK1.</text>
</comment>
<comment type="similarity">
    <text evidence="6">Belongs to the WD repeat POC1 family.</text>
</comment>
<proteinExistence type="evidence at transcript level"/>
<gene>
    <name type="primary">POC1B</name>
    <name type="synonym">WDR51B</name>
</gene>
<accession>Q5RD06</accession>
<dbReference type="EMBL" id="CR858112">
    <property type="protein sequence ID" value="CAH90351.1"/>
    <property type="molecule type" value="mRNA"/>
</dbReference>
<dbReference type="RefSeq" id="NP_001125169.1">
    <property type="nucleotide sequence ID" value="NM_001131697.2"/>
</dbReference>
<dbReference type="SMR" id="Q5RD06"/>
<dbReference type="STRING" id="9601.ENSPPYP00000005494"/>
<dbReference type="GeneID" id="100172056"/>
<dbReference type="KEGG" id="pon:100172056"/>
<dbReference type="CTD" id="282809"/>
<dbReference type="eggNOG" id="ENOG502QSVJ">
    <property type="taxonomic scope" value="Eukaryota"/>
</dbReference>
<dbReference type="InParanoid" id="Q5RD06"/>
<dbReference type="OrthoDB" id="10264588at2759"/>
<dbReference type="Proteomes" id="UP000001595">
    <property type="component" value="Unplaced"/>
</dbReference>
<dbReference type="GO" id="GO:0005814">
    <property type="term" value="C:centriole"/>
    <property type="evidence" value="ECO:0000250"/>
    <property type="project" value="UniProtKB"/>
</dbReference>
<dbReference type="GO" id="GO:0036064">
    <property type="term" value="C:ciliary basal body"/>
    <property type="evidence" value="ECO:0000250"/>
    <property type="project" value="UniProtKB"/>
</dbReference>
<dbReference type="GO" id="GO:0005737">
    <property type="term" value="C:cytoplasm"/>
    <property type="evidence" value="ECO:0007669"/>
    <property type="project" value="UniProtKB-KW"/>
</dbReference>
<dbReference type="GO" id="GO:0000922">
    <property type="term" value="C:spindle pole"/>
    <property type="evidence" value="ECO:0000250"/>
    <property type="project" value="UniProtKB"/>
</dbReference>
<dbReference type="GO" id="GO:0008283">
    <property type="term" value="P:cell population proliferation"/>
    <property type="evidence" value="ECO:0000250"/>
    <property type="project" value="UniProtKB"/>
</dbReference>
<dbReference type="GO" id="GO:0007099">
    <property type="term" value="P:centriole replication"/>
    <property type="evidence" value="ECO:0000250"/>
    <property type="project" value="UniProtKB"/>
</dbReference>
<dbReference type="GO" id="GO:0060271">
    <property type="term" value="P:cilium assembly"/>
    <property type="evidence" value="ECO:0000250"/>
    <property type="project" value="UniProtKB"/>
</dbReference>
<dbReference type="GO" id="GO:1903724">
    <property type="term" value="P:positive regulation of centriole elongation"/>
    <property type="evidence" value="ECO:0000250"/>
    <property type="project" value="UniProtKB"/>
</dbReference>
<dbReference type="GO" id="GO:0001895">
    <property type="term" value="P:retina homeostasis"/>
    <property type="evidence" value="ECO:0000250"/>
    <property type="project" value="UniProtKB"/>
</dbReference>
<dbReference type="CDD" id="cd00200">
    <property type="entry name" value="WD40"/>
    <property type="match status" value="1"/>
</dbReference>
<dbReference type="FunFam" id="2.130.10.10:FF:000235">
    <property type="entry name" value="POC1 centriolar protein homolog B"/>
    <property type="match status" value="1"/>
</dbReference>
<dbReference type="FunFam" id="2.130.10.10:FF:000279">
    <property type="entry name" value="POC1 centriolar protein homolog B"/>
    <property type="match status" value="1"/>
</dbReference>
<dbReference type="FunFam" id="2.130.10.10:FF:000528">
    <property type="entry name" value="POC1 centriolar protein homolog B"/>
    <property type="match status" value="1"/>
</dbReference>
<dbReference type="Gene3D" id="2.130.10.10">
    <property type="entry name" value="YVTN repeat-like/Quinoprotein amine dehydrogenase"/>
    <property type="match status" value="3"/>
</dbReference>
<dbReference type="InterPro" id="IPR020472">
    <property type="entry name" value="G-protein_beta_WD-40_rep"/>
</dbReference>
<dbReference type="InterPro" id="IPR015943">
    <property type="entry name" value="WD40/YVTN_repeat-like_dom_sf"/>
</dbReference>
<dbReference type="InterPro" id="IPR019775">
    <property type="entry name" value="WD40_repeat_CS"/>
</dbReference>
<dbReference type="InterPro" id="IPR036322">
    <property type="entry name" value="WD40_repeat_dom_sf"/>
</dbReference>
<dbReference type="InterPro" id="IPR001680">
    <property type="entry name" value="WD40_rpt"/>
</dbReference>
<dbReference type="InterPro" id="IPR050505">
    <property type="entry name" value="WDR55_POC1"/>
</dbReference>
<dbReference type="PANTHER" id="PTHR44019:SF1">
    <property type="entry name" value="POC1 CENTRIOLAR PROTEIN HOMOLOG B"/>
    <property type="match status" value="1"/>
</dbReference>
<dbReference type="PANTHER" id="PTHR44019">
    <property type="entry name" value="WD REPEAT-CONTAINING PROTEIN 55"/>
    <property type="match status" value="1"/>
</dbReference>
<dbReference type="Pfam" id="PF00400">
    <property type="entry name" value="WD40"/>
    <property type="match status" value="7"/>
</dbReference>
<dbReference type="PRINTS" id="PR00320">
    <property type="entry name" value="GPROTEINBRPT"/>
</dbReference>
<dbReference type="SMART" id="SM00320">
    <property type="entry name" value="WD40"/>
    <property type="match status" value="7"/>
</dbReference>
<dbReference type="SUPFAM" id="SSF50978">
    <property type="entry name" value="WD40 repeat-like"/>
    <property type="match status" value="1"/>
</dbReference>
<dbReference type="PROSITE" id="PS00678">
    <property type="entry name" value="WD_REPEATS_1"/>
    <property type="match status" value="3"/>
</dbReference>
<dbReference type="PROSITE" id="PS50082">
    <property type="entry name" value="WD_REPEATS_2"/>
    <property type="match status" value="7"/>
</dbReference>
<dbReference type="PROSITE" id="PS50294">
    <property type="entry name" value="WD_REPEATS_REGION"/>
    <property type="match status" value="1"/>
</dbReference>
<organism>
    <name type="scientific">Pongo abelii</name>
    <name type="common">Sumatran orangutan</name>
    <name type="synonym">Pongo pygmaeus abelii</name>
    <dbReference type="NCBI Taxonomy" id="9601"/>
    <lineage>
        <taxon>Eukaryota</taxon>
        <taxon>Metazoa</taxon>
        <taxon>Chordata</taxon>
        <taxon>Craniata</taxon>
        <taxon>Vertebrata</taxon>
        <taxon>Euteleostomi</taxon>
        <taxon>Mammalia</taxon>
        <taxon>Eutheria</taxon>
        <taxon>Euarchontoglires</taxon>
        <taxon>Primates</taxon>
        <taxon>Haplorrhini</taxon>
        <taxon>Catarrhini</taxon>
        <taxon>Hominidae</taxon>
        <taxon>Pongo</taxon>
    </lineage>
</organism>
<keyword id="KW-0966">Cell projection</keyword>
<keyword id="KW-0970">Cilium biogenesis/degradation</keyword>
<keyword id="KW-0175">Coiled coil</keyword>
<keyword id="KW-0963">Cytoplasm</keyword>
<keyword id="KW-0206">Cytoskeleton</keyword>
<keyword id="KW-0597">Phosphoprotein</keyword>
<keyword id="KW-1185">Reference proteome</keyword>
<keyword id="KW-0677">Repeat</keyword>
<keyword id="KW-0853">WD repeat</keyword>
<sequence length="451" mass="50713">MASATEDPVLERYFKGHKAAITSLDLSPNGKQLATASWDTFLMLWNFKPHARAYRYVGHKDVVTSVQFSPHGNLLASASRDRTVRLWIPDKRGKFSEFKAHTAPVRSVDFSADGQFLATASEDKSIKVWSMYRQRFLYSLYRHTHWVRCAKFSPDGRLIVSCSEDKTIKIWDTTNKQCVNNFSDSVGFANFVDFNPSGTCIASAGSDQTVKVWDVRVNKLLQHYQVHSGGVNCISFHPSDNYLVTASSDGTLKILDLLEGRLIYTLQGHTGPVFTVSFSKGGELFASGGADTQVLLWRTNFDELHCKGLNKRNLKRLHFDSPPHLLDIYPRTPHPHEEKVETVETTETSGRTLPDKGEEACGYFLNPSLMSPECSPTTTKKKTEDMSDLPSESQRSIPLAVTDALEHIMEQLNVLTQTVSILEQRLTLTEDKLKDCLENQQKLFSAVQQKS</sequence>